<dbReference type="EC" id="2.1.1.199" evidence="1"/>
<dbReference type="EMBL" id="CP001130">
    <property type="protein sequence ID" value="ACG57542.1"/>
    <property type="molecule type" value="Genomic_DNA"/>
</dbReference>
<dbReference type="RefSeq" id="WP_012513898.1">
    <property type="nucleotide sequence ID" value="NC_011126.1"/>
</dbReference>
<dbReference type="SMR" id="B4U8T1"/>
<dbReference type="STRING" id="380749.HY04AAS1_0855"/>
<dbReference type="KEGG" id="hya:HY04AAS1_0855"/>
<dbReference type="eggNOG" id="COG0275">
    <property type="taxonomic scope" value="Bacteria"/>
</dbReference>
<dbReference type="HOGENOM" id="CLU_038422_2_0_0"/>
<dbReference type="OrthoDB" id="9806637at2"/>
<dbReference type="GO" id="GO:0005737">
    <property type="term" value="C:cytoplasm"/>
    <property type="evidence" value="ECO:0007669"/>
    <property type="project" value="UniProtKB-SubCell"/>
</dbReference>
<dbReference type="GO" id="GO:0071424">
    <property type="term" value="F:rRNA (cytosine-N4-)-methyltransferase activity"/>
    <property type="evidence" value="ECO:0007669"/>
    <property type="project" value="UniProtKB-UniRule"/>
</dbReference>
<dbReference type="GO" id="GO:0070475">
    <property type="term" value="P:rRNA base methylation"/>
    <property type="evidence" value="ECO:0007669"/>
    <property type="project" value="UniProtKB-UniRule"/>
</dbReference>
<dbReference type="FunFam" id="1.10.150.170:FF:000003">
    <property type="entry name" value="Ribosomal RNA small subunit methyltransferase H"/>
    <property type="match status" value="1"/>
</dbReference>
<dbReference type="Gene3D" id="1.10.150.170">
    <property type="entry name" value="Putative methyltransferase TM0872, insert domain"/>
    <property type="match status" value="1"/>
</dbReference>
<dbReference type="Gene3D" id="3.40.50.150">
    <property type="entry name" value="Vaccinia Virus protein VP39"/>
    <property type="match status" value="1"/>
</dbReference>
<dbReference type="HAMAP" id="MF_01007">
    <property type="entry name" value="16SrRNA_methyltr_H"/>
    <property type="match status" value="1"/>
</dbReference>
<dbReference type="InterPro" id="IPR002903">
    <property type="entry name" value="RsmH"/>
</dbReference>
<dbReference type="InterPro" id="IPR023397">
    <property type="entry name" value="SAM-dep_MeTrfase_MraW_recog"/>
</dbReference>
<dbReference type="InterPro" id="IPR029063">
    <property type="entry name" value="SAM-dependent_MTases_sf"/>
</dbReference>
<dbReference type="NCBIfam" id="TIGR00006">
    <property type="entry name" value="16S rRNA (cytosine(1402)-N(4))-methyltransferase RsmH"/>
    <property type="match status" value="1"/>
</dbReference>
<dbReference type="PANTHER" id="PTHR11265:SF0">
    <property type="entry name" value="12S RRNA N4-METHYLCYTIDINE METHYLTRANSFERASE"/>
    <property type="match status" value="1"/>
</dbReference>
<dbReference type="PANTHER" id="PTHR11265">
    <property type="entry name" value="S-ADENOSYL-METHYLTRANSFERASE MRAW"/>
    <property type="match status" value="1"/>
</dbReference>
<dbReference type="Pfam" id="PF01795">
    <property type="entry name" value="Methyltransf_5"/>
    <property type="match status" value="1"/>
</dbReference>
<dbReference type="PIRSF" id="PIRSF004486">
    <property type="entry name" value="MraW"/>
    <property type="match status" value="1"/>
</dbReference>
<dbReference type="SUPFAM" id="SSF81799">
    <property type="entry name" value="Putative methyltransferase TM0872, insert domain"/>
    <property type="match status" value="1"/>
</dbReference>
<dbReference type="SUPFAM" id="SSF53335">
    <property type="entry name" value="S-adenosyl-L-methionine-dependent methyltransferases"/>
    <property type="match status" value="1"/>
</dbReference>
<organism>
    <name type="scientific">Hydrogenobaculum sp. (strain Y04AAS1)</name>
    <dbReference type="NCBI Taxonomy" id="380749"/>
    <lineage>
        <taxon>Bacteria</taxon>
        <taxon>Pseudomonadati</taxon>
        <taxon>Aquificota</taxon>
        <taxon>Aquificia</taxon>
        <taxon>Aquificales</taxon>
        <taxon>Aquificaceae</taxon>
        <taxon>Hydrogenobaculum</taxon>
    </lineage>
</organism>
<name>RSMH_HYDS0</name>
<accession>B4U8T1</accession>
<evidence type="ECO:0000255" key="1">
    <source>
        <dbReference type="HAMAP-Rule" id="MF_01007"/>
    </source>
</evidence>
<feature type="chain" id="PRO_0000386930" description="Ribosomal RNA small subunit methyltransferase H">
    <location>
        <begin position="1"/>
        <end position="296"/>
    </location>
</feature>
<feature type="binding site" evidence="1">
    <location>
        <begin position="30"/>
        <end position="32"/>
    </location>
    <ligand>
        <name>S-adenosyl-L-methionine</name>
        <dbReference type="ChEBI" id="CHEBI:59789"/>
    </ligand>
</feature>
<feature type="binding site" evidence="1">
    <location>
        <position position="49"/>
    </location>
    <ligand>
        <name>S-adenosyl-L-methionine</name>
        <dbReference type="ChEBI" id="CHEBI:59789"/>
    </ligand>
</feature>
<feature type="binding site" evidence="1">
    <location>
        <position position="77"/>
    </location>
    <ligand>
        <name>S-adenosyl-L-methionine</name>
        <dbReference type="ChEBI" id="CHEBI:59789"/>
    </ligand>
</feature>
<feature type="binding site" evidence="1">
    <location>
        <position position="95"/>
    </location>
    <ligand>
        <name>S-adenosyl-L-methionine</name>
        <dbReference type="ChEBI" id="CHEBI:59789"/>
    </ligand>
</feature>
<feature type="binding site" evidence="1">
    <location>
        <position position="102"/>
    </location>
    <ligand>
        <name>S-adenosyl-L-methionine</name>
        <dbReference type="ChEBI" id="CHEBI:59789"/>
    </ligand>
</feature>
<protein>
    <recommendedName>
        <fullName evidence="1">Ribosomal RNA small subunit methyltransferase H</fullName>
        <ecNumber evidence="1">2.1.1.199</ecNumber>
    </recommendedName>
    <alternativeName>
        <fullName evidence="1">16S rRNA m(4)C1402 methyltransferase</fullName>
    </alternativeName>
    <alternativeName>
        <fullName evidence="1">rRNA (cytosine-N(4)-)-methyltransferase RsmH</fullName>
    </alternativeName>
</protein>
<keyword id="KW-0963">Cytoplasm</keyword>
<keyword id="KW-0489">Methyltransferase</keyword>
<keyword id="KW-0698">rRNA processing</keyword>
<keyword id="KW-0949">S-adenosyl-L-methionine</keyword>
<keyword id="KW-0808">Transferase</keyword>
<proteinExistence type="inferred from homology"/>
<comment type="function">
    <text evidence="1">Specifically methylates the N4 position of cytidine in position 1402 (C1402) of 16S rRNA.</text>
</comment>
<comment type="catalytic activity">
    <reaction evidence="1">
        <text>cytidine(1402) in 16S rRNA + S-adenosyl-L-methionine = N(4)-methylcytidine(1402) in 16S rRNA + S-adenosyl-L-homocysteine + H(+)</text>
        <dbReference type="Rhea" id="RHEA:42928"/>
        <dbReference type="Rhea" id="RHEA-COMP:10286"/>
        <dbReference type="Rhea" id="RHEA-COMP:10287"/>
        <dbReference type="ChEBI" id="CHEBI:15378"/>
        <dbReference type="ChEBI" id="CHEBI:57856"/>
        <dbReference type="ChEBI" id="CHEBI:59789"/>
        <dbReference type="ChEBI" id="CHEBI:74506"/>
        <dbReference type="ChEBI" id="CHEBI:82748"/>
        <dbReference type="EC" id="2.1.1.199"/>
    </reaction>
</comment>
<comment type="subcellular location">
    <subcellularLocation>
        <location evidence="1">Cytoplasm</location>
    </subcellularLocation>
</comment>
<comment type="similarity">
    <text evidence="1">Belongs to the methyltransferase superfamily. RsmH family.</text>
</comment>
<reference key="1">
    <citation type="journal article" date="2009" name="J. Bacteriol.">
        <title>Complete and draft genome sequences of six members of the Aquificales.</title>
        <authorList>
            <person name="Reysenbach A.-L."/>
            <person name="Hamamura N."/>
            <person name="Podar M."/>
            <person name="Griffiths E."/>
            <person name="Ferreira S."/>
            <person name="Hochstein R."/>
            <person name="Heidelberg J."/>
            <person name="Johnson J."/>
            <person name="Mead D."/>
            <person name="Pohorille A."/>
            <person name="Sarmiento M."/>
            <person name="Schweighofer K."/>
            <person name="Seshadri R."/>
            <person name="Voytek M.A."/>
        </authorList>
    </citation>
    <scope>NUCLEOTIDE SEQUENCE [LARGE SCALE GENOMIC DNA]</scope>
    <source>
        <strain>Y04AAS1</strain>
    </source>
</reference>
<gene>
    <name evidence="1" type="primary">rsmH</name>
    <name type="synonym">mraW</name>
    <name type="ordered locus">HY04AAS1_0855</name>
</gene>
<sequence>MHKSVLLKEVTDFLSNPCPKIHIDATLGLGGHAKALLEVCKDTFLIGIDKDENAIEIAKEKLKGFNAVFYHGSFKDFDIVLKEEGLLYFDSILFDFGVSSLQLDEEEGFSFQREDFLDMRMDKRQQKTAYIVINTYKEKELADIFYKYGEERLSKKIARSIVEKRKKKPIETTKELVDIVSSCYPYKYSKINPATKVFQALRIEVNSELEDIKIALSKLLDFAKEGSKFAFISFHSLEDRLVKEFIKNNADKLKVCSKKPITPSDEELLYNKRARSAKLRCAKLCYNEKKDEAFDS</sequence>